<gene>
    <name evidence="1" type="primary">rplT</name>
    <name type="ordered locus">Cthe_1223</name>
</gene>
<accession>A3DES6</accession>
<sequence>MSRVKGGVRTRARHKKILKLAKGYFGAKSKNFRIANQAVMKSLVYAYRDRRARKRDFRKLWITRINAAARMNGLSYSKFMNGLKKSGIALNRKMLAEMAVNDAEAFAQLVEKVKAVI</sequence>
<keyword id="KW-1185">Reference proteome</keyword>
<keyword id="KW-0687">Ribonucleoprotein</keyword>
<keyword id="KW-0689">Ribosomal protein</keyword>
<keyword id="KW-0694">RNA-binding</keyword>
<keyword id="KW-0699">rRNA-binding</keyword>
<name>RL20_ACET2</name>
<organism>
    <name type="scientific">Acetivibrio thermocellus (strain ATCC 27405 / DSM 1237 / JCM 9322 / NBRC 103400 / NCIMB 10682 / NRRL B-4536 / VPI 7372)</name>
    <name type="common">Clostridium thermocellum</name>
    <dbReference type="NCBI Taxonomy" id="203119"/>
    <lineage>
        <taxon>Bacteria</taxon>
        <taxon>Bacillati</taxon>
        <taxon>Bacillota</taxon>
        <taxon>Clostridia</taxon>
        <taxon>Eubacteriales</taxon>
        <taxon>Oscillospiraceae</taxon>
        <taxon>Acetivibrio</taxon>
    </lineage>
</organism>
<evidence type="ECO:0000255" key="1">
    <source>
        <dbReference type="HAMAP-Rule" id="MF_00382"/>
    </source>
</evidence>
<evidence type="ECO:0000305" key="2"/>
<proteinExistence type="inferred from homology"/>
<dbReference type="EMBL" id="CP000568">
    <property type="protein sequence ID" value="ABN52455.1"/>
    <property type="molecule type" value="Genomic_DNA"/>
</dbReference>
<dbReference type="RefSeq" id="WP_003518897.1">
    <property type="nucleotide sequence ID" value="NC_009012.1"/>
</dbReference>
<dbReference type="SMR" id="A3DES6"/>
<dbReference type="STRING" id="203119.Cthe_1223"/>
<dbReference type="GeneID" id="35802864"/>
<dbReference type="KEGG" id="cth:Cthe_1223"/>
<dbReference type="eggNOG" id="COG0292">
    <property type="taxonomic scope" value="Bacteria"/>
</dbReference>
<dbReference type="HOGENOM" id="CLU_123265_0_1_9"/>
<dbReference type="OrthoDB" id="9808966at2"/>
<dbReference type="Proteomes" id="UP000002145">
    <property type="component" value="Chromosome"/>
</dbReference>
<dbReference type="GO" id="GO:1990904">
    <property type="term" value="C:ribonucleoprotein complex"/>
    <property type="evidence" value="ECO:0007669"/>
    <property type="project" value="UniProtKB-KW"/>
</dbReference>
<dbReference type="GO" id="GO:0005840">
    <property type="term" value="C:ribosome"/>
    <property type="evidence" value="ECO:0007669"/>
    <property type="project" value="UniProtKB-KW"/>
</dbReference>
<dbReference type="GO" id="GO:0019843">
    <property type="term" value="F:rRNA binding"/>
    <property type="evidence" value="ECO:0007669"/>
    <property type="project" value="UniProtKB-UniRule"/>
</dbReference>
<dbReference type="GO" id="GO:0003735">
    <property type="term" value="F:structural constituent of ribosome"/>
    <property type="evidence" value="ECO:0007669"/>
    <property type="project" value="InterPro"/>
</dbReference>
<dbReference type="GO" id="GO:0000027">
    <property type="term" value="P:ribosomal large subunit assembly"/>
    <property type="evidence" value="ECO:0007669"/>
    <property type="project" value="UniProtKB-UniRule"/>
</dbReference>
<dbReference type="GO" id="GO:0006412">
    <property type="term" value="P:translation"/>
    <property type="evidence" value="ECO:0007669"/>
    <property type="project" value="InterPro"/>
</dbReference>
<dbReference type="CDD" id="cd07026">
    <property type="entry name" value="Ribosomal_L20"/>
    <property type="match status" value="1"/>
</dbReference>
<dbReference type="FunFam" id="1.10.1900.20:FF:000001">
    <property type="entry name" value="50S ribosomal protein L20"/>
    <property type="match status" value="1"/>
</dbReference>
<dbReference type="Gene3D" id="6.10.160.10">
    <property type="match status" value="1"/>
</dbReference>
<dbReference type="Gene3D" id="1.10.1900.20">
    <property type="entry name" value="Ribosomal protein L20"/>
    <property type="match status" value="1"/>
</dbReference>
<dbReference type="HAMAP" id="MF_00382">
    <property type="entry name" value="Ribosomal_bL20"/>
    <property type="match status" value="1"/>
</dbReference>
<dbReference type="InterPro" id="IPR005813">
    <property type="entry name" value="Ribosomal_bL20"/>
</dbReference>
<dbReference type="InterPro" id="IPR049946">
    <property type="entry name" value="RIBOSOMAL_L20_CS"/>
</dbReference>
<dbReference type="InterPro" id="IPR035566">
    <property type="entry name" value="Ribosomal_protein_bL20_C"/>
</dbReference>
<dbReference type="NCBIfam" id="TIGR01032">
    <property type="entry name" value="rplT_bact"/>
    <property type="match status" value="1"/>
</dbReference>
<dbReference type="PANTHER" id="PTHR10986">
    <property type="entry name" value="39S RIBOSOMAL PROTEIN L20"/>
    <property type="match status" value="1"/>
</dbReference>
<dbReference type="Pfam" id="PF00453">
    <property type="entry name" value="Ribosomal_L20"/>
    <property type="match status" value="1"/>
</dbReference>
<dbReference type="PRINTS" id="PR00062">
    <property type="entry name" value="RIBOSOMALL20"/>
</dbReference>
<dbReference type="SUPFAM" id="SSF74731">
    <property type="entry name" value="Ribosomal protein L20"/>
    <property type="match status" value="1"/>
</dbReference>
<dbReference type="PROSITE" id="PS00937">
    <property type="entry name" value="RIBOSOMAL_L20"/>
    <property type="match status" value="1"/>
</dbReference>
<reference key="1">
    <citation type="submission" date="2007-02" db="EMBL/GenBank/DDBJ databases">
        <title>Complete sequence of Clostridium thermocellum ATCC 27405.</title>
        <authorList>
            <consortium name="US DOE Joint Genome Institute"/>
            <person name="Copeland A."/>
            <person name="Lucas S."/>
            <person name="Lapidus A."/>
            <person name="Barry K."/>
            <person name="Detter J.C."/>
            <person name="Glavina del Rio T."/>
            <person name="Hammon N."/>
            <person name="Israni S."/>
            <person name="Dalin E."/>
            <person name="Tice H."/>
            <person name="Pitluck S."/>
            <person name="Chertkov O."/>
            <person name="Brettin T."/>
            <person name="Bruce D."/>
            <person name="Han C."/>
            <person name="Tapia R."/>
            <person name="Gilna P."/>
            <person name="Schmutz J."/>
            <person name="Larimer F."/>
            <person name="Land M."/>
            <person name="Hauser L."/>
            <person name="Kyrpides N."/>
            <person name="Mikhailova N."/>
            <person name="Wu J.H.D."/>
            <person name="Newcomb M."/>
            <person name="Richardson P."/>
        </authorList>
    </citation>
    <scope>NUCLEOTIDE SEQUENCE [LARGE SCALE GENOMIC DNA]</scope>
    <source>
        <strain>ATCC 27405 / DSM 1237 / JCM 9322 / NBRC 103400 / NCIMB 10682 / NRRL B-4536 / VPI 7372</strain>
    </source>
</reference>
<comment type="function">
    <text evidence="1">Binds directly to 23S ribosomal RNA and is necessary for the in vitro assembly process of the 50S ribosomal subunit. It is not involved in the protein synthesizing functions of that subunit.</text>
</comment>
<comment type="similarity">
    <text evidence="1">Belongs to the bacterial ribosomal protein bL20 family.</text>
</comment>
<protein>
    <recommendedName>
        <fullName evidence="1">Large ribosomal subunit protein bL20</fullName>
    </recommendedName>
    <alternativeName>
        <fullName evidence="2">50S ribosomal protein L20</fullName>
    </alternativeName>
</protein>
<feature type="chain" id="PRO_1000048964" description="Large ribosomal subunit protein bL20">
    <location>
        <begin position="1"/>
        <end position="117"/>
    </location>
</feature>